<keyword id="KW-1003">Cell membrane</keyword>
<keyword id="KW-0472">Membrane</keyword>
<keyword id="KW-0677">Repeat</keyword>
<organism>
    <name type="scientific">Mycoplasmoides pneumoniae (strain ATCC 15531 / DSM 23978 / CIP 103766 / NBRC 14401 / NCTC 10119 / FH)</name>
    <name type="common">Mycoplasma pneumoniae</name>
    <dbReference type="NCBI Taxonomy" id="722438"/>
    <lineage>
        <taxon>Bacteria</taxon>
        <taxon>Bacillati</taxon>
        <taxon>Mycoplasmatota</taxon>
        <taxon>Mycoplasmoidales</taxon>
        <taxon>Mycoplasmoidaceae</taxon>
        <taxon>Mycoplasmoides</taxon>
    </lineage>
</organism>
<feature type="chain" id="PRO_0000405027" description="Proline-rich P65 protein">
    <location>
        <begin position="1"/>
        <end position="407"/>
    </location>
</feature>
<feature type="repeat" description="1">
    <location>
        <begin position="40"/>
        <end position="45"/>
    </location>
</feature>
<feature type="repeat" description="2">
    <location>
        <begin position="75"/>
        <end position="80"/>
    </location>
</feature>
<feature type="repeat" description="3">
    <location>
        <begin position="83"/>
        <end position="87"/>
    </location>
</feature>
<feature type="repeat" description="4">
    <location>
        <begin position="89"/>
        <end position="93"/>
    </location>
</feature>
<feature type="repeat" description="5">
    <location>
        <begin position="95"/>
        <end position="99"/>
    </location>
</feature>
<feature type="repeat" description="6">
    <location>
        <begin position="101"/>
        <end position="105"/>
    </location>
</feature>
<feature type="repeat" description="7">
    <location>
        <begin position="107"/>
        <end position="111"/>
    </location>
</feature>
<feature type="repeat" description="8">
    <location>
        <begin position="119"/>
        <end position="123"/>
    </location>
</feature>
<feature type="repeat" description="9">
    <location>
        <begin position="140"/>
        <end position="145"/>
    </location>
</feature>
<feature type="repeat" description="10">
    <location>
        <begin position="150"/>
        <end position="154"/>
    </location>
</feature>
<feature type="repeat" description="11">
    <location>
        <begin position="156"/>
        <end position="160"/>
    </location>
</feature>
<feature type="repeat" description="12">
    <location>
        <begin position="170"/>
        <end position="174"/>
    </location>
</feature>
<feature type="region of interest" description="Disordered" evidence="1">
    <location>
        <begin position="1"/>
        <end position="50"/>
    </location>
</feature>
<feature type="region of interest" description="12 X 5 AA repeats of D-P-N-Q-A-Y">
    <location>
        <begin position="40"/>
        <end position="174"/>
    </location>
</feature>
<feature type="compositionally biased region" description="Polar residues" evidence="1">
    <location>
        <begin position="7"/>
        <end position="25"/>
    </location>
</feature>
<feature type="sequence conflict" description="In Ref. 1; CAA84430." evidence="3" ref="1">
    <original>K</original>
    <variation>E</variation>
    <location>
        <position position="5"/>
    </location>
</feature>
<feature type="sequence conflict" description="In Ref. 1; CAA84430." evidence="3" ref="1">
    <original>A</original>
    <variation>ADPNAYQDPNAYTDPNA</variation>
    <location>
        <position position="147"/>
    </location>
</feature>
<feature type="sequence conflict" description="In Ref. 1; CAA84430." evidence="3" ref="1">
    <original>H</original>
    <variation>P</variation>
    <location>
        <position position="171"/>
    </location>
</feature>
<proteinExistence type="predicted"/>
<reference key="1">
    <citation type="journal article" date="1995" name="J. Bacteriol.">
        <title>The proline-rich P65 protein of Mycoplasma pneumoniae is a component of the Triton X-100-insoluble fraction and exhibits size polymorphism in the strains M129 and FH.</title>
        <authorList>
            <person name="Proft T."/>
            <person name="Hilbert H."/>
            <person name="Layh-Schmitt G."/>
            <person name="Herrmann R."/>
        </authorList>
    </citation>
    <scope>NUCLEOTIDE SEQUENCE [GENOMIC DNA]</scope>
    <scope>SUBCELLULAR LOCATION</scope>
    <source>
        <strain>ATCC 15531 / DSM 23978 / CIP 103766 / NBRC 14401 / NCTC 10119 / FH</strain>
    </source>
</reference>
<reference key="2">
    <citation type="journal article" date="2010" name="Appl. Environ. Microbiol.">
        <title>Targeted chromosomal knockouts in Mycoplasma pneumoniae.</title>
        <authorList>
            <person name="Krishnakumar R."/>
            <person name="Assad-Garcia N."/>
            <person name="Benders G.A."/>
            <person name="Phan Q."/>
            <person name="Montague M.G."/>
            <person name="Glass J.I."/>
        </authorList>
    </citation>
    <scope>NUCLEOTIDE SEQUENCE [LARGE SCALE GENOMIC DNA]</scope>
    <source>
        <strain>ATCC 15531 / DSM 23978 / CIP 103766 / NBRC 14401 / NCTC 10119 / FH</strain>
    </source>
</reference>
<sequence length="407" mass="47342">MDINKPGWNQSDQQATAYDPNQQQYYGDGSTYYDPDQAVDPNQAYYPDPNTYPDAAAYYGYGQDGQAYPQDYAQDPNQAYYADPNAYQDPNAYTDPNAYVDPNAYQDPNAYVDPNNYTDPNAYYGYGQDGQAYPQDYAQDPNQAYYAYVDPNAYQDPNAYTDPYYVTSTDHNAYYGQVDNVPALEASDLAYEVTPQEQAAEQELFSEPETKVIREIHEFPFEKIRSYFQTDFDSYNSRLTQLKDKLDNAIFSMRKAIDTVKENSANLQIMKQNFERQLKEQQTQRLTSNTDAEKIGAKINQLEERMQRLSRTMESVEWTKKEPRQEQFDPRFVDPRNFNNYVNNTDTMMSMFEKVLMMNLLRSTTPVQPPVQYFTPQPLTASPRPVYEEPISASFRRRGYRGDEFYE</sequence>
<dbReference type="EMBL" id="Z34978">
    <property type="protein sequence ID" value="CAA84430.1"/>
    <property type="molecule type" value="Genomic_DNA"/>
</dbReference>
<dbReference type="EMBL" id="CP002077">
    <property type="protein sequence ID" value="ADK87002.1"/>
    <property type="molecule type" value="Genomic_DNA"/>
</dbReference>
<dbReference type="SMR" id="E1QC64"/>
<dbReference type="STRING" id="722438.F539_01745"/>
<dbReference type="PaxDb" id="722438-MPNE_0359"/>
<dbReference type="KEGG" id="mpj:MPNE_0359"/>
<dbReference type="PATRIC" id="fig|722438.3.peg.344"/>
<dbReference type="eggNOG" id="COG3266">
    <property type="taxonomic scope" value="Bacteria"/>
</dbReference>
<dbReference type="HOGENOM" id="CLU_741505_0_0_14"/>
<dbReference type="Proteomes" id="UP000007756">
    <property type="component" value="Chromosome"/>
</dbReference>
<dbReference type="GO" id="GO:0005886">
    <property type="term" value="C:plasma membrane"/>
    <property type="evidence" value="ECO:0007669"/>
    <property type="project" value="UniProtKB-SubCell"/>
</dbReference>
<dbReference type="InterPro" id="IPR011004">
    <property type="entry name" value="Trimer_LpxA-like_sf"/>
</dbReference>
<dbReference type="SUPFAM" id="SSF51161">
    <property type="entry name" value="Trimeric LpxA-like enzymes"/>
    <property type="match status" value="1"/>
</dbReference>
<protein>
    <recommendedName>
        <fullName>Proline-rich P65 protein</fullName>
    </recommendedName>
</protein>
<name>P65_MYCPB</name>
<evidence type="ECO:0000256" key="1">
    <source>
        <dbReference type="SAM" id="MobiDB-lite"/>
    </source>
</evidence>
<evidence type="ECO:0000269" key="2">
    <source>
    </source>
</evidence>
<evidence type="ECO:0000305" key="3"/>
<comment type="subcellular location">
    <subcellularLocation>
        <location evidence="2">Cell membrane</location>
        <topology evidence="2">Peripheral membrane protein</topology>
    </subcellularLocation>
    <text>Probably with epitopes exposed at the cell surface.</text>
</comment>
<comment type="domain">
    <text>The penta/hexapeptides repeats form a proline-rich acidic domain. In addition, a part of this region contains a perfect direct repeat.</text>
</comment>
<comment type="PTM">
    <text evidence="3">The N-terminus is blocked.</text>
</comment>
<gene>
    <name type="primary">p65</name>
    <name type="ordered locus">MPNE_0359</name>
</gene>
<accession>E1QC64</accession>
<accession>P53663</accession>
<accession>P53664</accession>
<accession>Q6LAC2</accession>
<accession>Q6LAC3</accession>